<feature type="chain" id="PRO_0000220347" description="UPF0355 protein SAV0387">
    <location>
        <begin position="1"/>
        <end position="135"/>
    </location>
</feature>
<name>UP355_STAAM</name>
<protein>
    <recommendedName>
        <fullName>UPF0355 protein SAV0387</fullName>
    </recommendedName>
</protein>
<comment type="similarity">
    <text evidence="1">Belongs to the UPF0355 family.</text>
</comment>
<evidence type="ECO:0000305" key="1"/>
<organism>
    <name type="scientific">Staphylococcus aureus (strain Mu50 / ATCC 700699)</name>
    <dbReference type="NCBI Taxonomy" id="158878"/>
    <lineage>
        <taxon>Bacteria</taxon>
        <taxon>Bacillati</taxon>
        <taxon>Bacillota</taxon>
        <taxon>Bacilli</taxon>
        <taxon>Bacillales</taxon>
        <taxon>Staphylococcaceae</taxon>
        <taxon>Staphylococcus</taxon>
    </lineage>
</organism>
<proteinExistence type="inferred from homology"/>
<gene>
    <name type="ordered locus">SAV0387</name>
</gene>
<reference key="1">
    <citation type="journal article" date="2001" name="Lancet">
        <title>Whole genome sequencing of meticillin-resistant Staphylococcus aureus.</title>
        <authorList>
            <person name="Kuroda M."/>
            <person name="Ohta T."/>
            <person name="Uchiyama I."/>
            <person name="Baba T."/>
            <person name="Yuzawa H."/>
            <person name="Kobayashi I."/>
            <person name="Cui L."/>
            <person name="Oguchi A."/>
            <person name="Aoki K."/>
            <person name="Nagai Y."/>
            <person name="Lian J.-Q."/>
            <person name="Ito T."/>
            <person name="Kanamori M."/>
            <person name="Matsumaru H."/>
            <person name="Maruyama A."/>
            <person name="Murakami H."/>
            <person name="Hosoyama A."/>
            <person name="Mizutani-Ui Y."/>
            <person name="Takahashi N.K."/>
            <person name="Sawano T."/>
            <person name="Inoue R."/>
            <person name="Kaito C."/>
            <person name="Sekimizu K."/>
            <person name="Hirakawa H."/>
            <person name="Kuhara S."/>
            <person name="Goto S."/>
            <person name="Yabuzaki J."/>
            <person name="Kanehisa M."/>
            <person name="Yamashita A."/>
            <person name="Oshima K."/>
            <person name="Furuya K."/>
            <person name="Yoshino C."/>
            <person name="Shiba T."/>
            <person name="Hattori M."/>
            <person name="Ogasawara N."/>
            <person name="Hayashi H."/>
            <person name="Hiramatsu K."/>
        </authorList>
    </citation>
    <scope>NUCLEOTIDE SEQUENCE [LARGE SCALE GENOMIC DNA]</scope>
    <source>
        <strain>Mu50 / ATCC 700699</strain>
    </source>
</reference>
<sequence>MADITVVNDTGELYNVINQKKSEGYLESELTIISKSKLHLNDLHDSEISLISTSGTFSDRMTKLLTGEDGEHAVLSRYNLAPDELEKYKQLILDDKMLVVAVRDKSSHKEVQEHNSAYEEIDITHFAEASKGPKA</sequence>
<dbReference type="EMBL" id="BA000017">
    <property type="protein sequence ID" value="BAB56549.1"/>
    <property type="molecule type" value="Genomic_DNA"/>
</dbReference>
<dbReference type="RefSeq" id="WP_000763767.1">
    <property type="nucleotide sequence ID" value="NC_002758.2"/>
</dbReference>
<dbReference type="KEGG" id="sav:SAV0387"/>
<dbReference type="HOGENOM" id="CLU_152601_0_0_9"/>
<dbReference type="Proteomes" id="UP000002481">
    <property type="component" value="Chromosome"/>
</dbReference>
<dbReference type="InterPro" id="IPR025889">
    <property type="entry name" value="GSP17M-like_dom"/>
</dbReference>
<dbReference type="Pfam" id="PF11181">
    <property type="entry name" value="YflT"/>
    <property type="match status" value="1"/>
</dbReference>
<accession>Q99WJ2</accession>